<reference key="1">
    <citation type="journal article" date="2003" name="Nature">
        <title>The genome sequence of the filamentous fungus Neurospora crassa.</title>
        <authorList>
            <person name="Galagan J.E."/>
            <person name="Calvo S.E."/>
            <person name="Borkovich K.A."/>
            <person name="Selker E.U."/>
            <person name="Read N.D."/>
            <person name="Jaffe D.B."/>
            <person name="FitzHugh W."/>
            <person name="Ma L.-J."/>
            <person name="Smirnov S."/>
            <person name="Purcell S."/>
            <person name="Rehman B."/>
            <person name="Elkins T."/>
            <person name="Engels R."/>
            <person name="Wang S."/>
            <person name="Nielsen C.B."/>
            <person name="Butler J."/>
            <person name="Endrizzi M."/>
            <person name="Qui D."/>
            <person name="Ianakiev P."/>
            <person name="Bell-Pedersen D."/>
            <person name="Nelson M.A."/>
            <person name="Werner-Washburne M."/>
            <person name="Selitrennikoff C.P."/>
            <person name="Kinsey J.A."/>
            <person name="Braun E.L."/>
            <person name="Zelter A."/>
            <person name="Schulte U."/>
            <person name="Kothe G.O."/>
            <person name="Jedd G."/>
            <person name="Mewes H.-W."/>
            <person name="Staben C."/>
            <person name="Marcotte E."/>
            <person name="Greenberg D."/>
            <person name="Roy A."/>
            <person name="Foley K."/>
            <person name="Naylor J."/>
            <person name="Stange-Thomann N."/>
            <person name="Barrett R."/>
            <person name="Gnerre S."/>
            <person name="Kamal M."/>
            <person name="Kamvysselis M."/>
            <person name="Mauceli E.W."/>
            <person name="Bielke C."/>
            <person name="Rudd S."/>
            <person name="Frishman D."/>
            <person name="Krystofova S."/>
            <person name="Rasmussen C."/>
            <person name="Metzenberg R.L."/>
            <person name="Perkins D.D."/>
            <person name="Kroken S."/>
            <person name="Cogoni C."/>
            <person name="Macino G."/>
            <person name="Catcheside D.E.A."/>
            <person name="Li W."/>
            <person name="Pratt R.J."/>
            <person name="Osmani S.A."/>
            <person name="DeSouza C.P.C."/>
            <person name="Glass N.L."/>
            <person name="Orbach M.J."/>
            <person name="Berglund J.A."/>
            <person name="Voelker R."/>
            <person name="Yarden O."/>
            <person name="Plamann M."/>
            <person name="Seiler S."/>
            <person name="Dunlap J.C."/>
            <person name="Radford A."/>
            <person name="Aramayo R."/>
            <person name="Natvig D.O."/>
            <person name="Alex L.A."/>
            <person name="Mannhaupt G."/>
            <person name="Ebbole D.J."/>
            <person name="Freitag M."/>
            <person name="Paulsen I."/>
            <person name="Sachs M.S."/>
            <person name="Lander E.S."/>
            <person name="Nusbaum C."/>
            <person name="Birren B.W."/>
        </authorList>
    </citation>
    <scope>NUCLEOTIDE SEQUENCE [LARGE SCALE GENOMIC DNA]</scope>
    <source>
        <strain>ATCC 24698 / 74-OR23-1A / CBS 708.71 / DSM 1257 / FGSC 987</strain>
    </source>
</reference>
<reference key="2">
    <citation type="journal article" date="2021" name="Proc. Natl. Acad. Sci. U.S.A.">
        <title>Structure of the translating Neurospora ribosome arrested by cycloheximide.</title>
        <authorList>
            <person name="Shen L."/>
            <person name="Su Z."/>
            <person name="Yang K."/>
            <person name="Wu C."/>
            <person name="Becker T."/>
            <person name="Bell-Pedersen D."/>
            <person name="Zhang J."/>
            <person name="Sachs M.S."/>
        </authorList>
    </citation>
    <scope>STRUCTURE BY ELECTRON MICROSCOPY (2.70 ANGSTROMS)</scope>
</reference>
<sequence length="130" mass="14820">MVRTSVLHDALNSINNAEKAGKRQVLIRPSSKVIIKFLQVMQKHGYIGEFEEVDDHRSGKIVVQLNGRMNKCGVISPRYNVRLAELEKWVVKLLPARQFGYVILTTSAGIMDHEEARRKHVSGKIIGFFY</sequence>
<protein>
    <recommendedName>
        <fullName evidence="2">Small ribosomal subunit protein uS8</fullName>
    </recommendedName>
    <alternativeName>
        <fullName>40S ribosomal protein S22</fullName>
    </alternativeName>
    <alternativeName>
        <fullName>Cytoplasmic ribosomal protein 27</fullName>
    </alternativeName>
</protein>
<accession>Q7RV75</accession>
<accession>U9W2R3</accession>
<comment type="function">
    <text evidence="4">Component of the ribosome, a large ribonucleoprotein complex responsible for the synthesis of proteins in the cell. The small ribosomal subunit (SSU) binds messenger RNAs (mRNAs) and translates the encoded message by selecting cognate aminoacyl-transfer RNA (tRNA) molecules. The large subunit (LSU) contains the ribosomal catalytic site termed the peptidyl transferase center (PTC), which catalyzes the formation of peptide bonds, thereby polymerizing the amino acids delivered by tRNAs into a polypeptide chain. The nascent polypeptides leave the ribosome through a tunnel in the LSU and interact with protein factors that function in enzymatic processing, targeting, and the membrane insertion of nascent chains at the exit of the ribosomal tunnel.</text>
</comment>
<comment type="subunit">
    <text evidence="1">Component of the small ribosomal subunit (SSU). Mature N.crassa ribosomes consist of a small (40S) and a large (60S) subunit. The 40S small subunit contains 1 molecule of ribosomal RNA (18S rRNA) and at least 32 different proteins. The large 60S subunit contains 3 rRNA molecules (26S, 5.8S and 5S rRNA) and at least 42 different proteins.</text>
</comment>
<comment type="subcellular location">
    <subcellularLocation>
        <location evidence="1">Cytoplasm</location>
    </subcellularLocation>
</comment>
<comment type="similarity">
    <text evidence="3">Belongs to the universal ribosomal protein uS8 family.</text>
</comment>
<organism>
    <name type="scientific">Neurospora crassa (strain ATCC 24698 / 74-OR23-1A / CBS 708.71 / DSM 1257 / FGSC 987)</name>
    <dbReference type="NCBI Taxonomy" id="367110"/>
    <lineage>
        <taxon>Eukaryota</taxon>
        <taxon>Fungi</taxon>
        <taxon>Dikarya</taxon>
        <taxon>Ascomycota</taxon>
        <taxon>Pezizomycotina</taxon>
        <taxon>Sordariomycetes</taxon>
        <taxon>Sordariomycetidae</taxon>
        <taxon>Sordariales</taxon>
        <taxon>Sordariaceae</taxon>
        <taxon>Neurospora</taxon>
    </lineage>
</organism>
<proteinExistence type="evidence at protein level"/>
<evidence type="ECO:0000269" key="1">
    <source>
    </source>
</evidence>
<evidence type="ECO:0000303" key="2">
    <source>
    </source>
</evidence>
<evidence type="ECO:0000305" key="3"/>
<evidence type="ECO:0000305" key="4">
    <source>
    </source>
</evidence>
<dbReference type="EMBL" id="CM002238">
    <property type="protein sequence ID" value="ESA43161.1"/>
    <property type="molecule type" value="Genomic_DNA"/>
</dbReference>
<dbReference type="EMBL" id="CM002238">
    <property type="protein sequence ID" value="ESA43162.1"/>
    <property type="molecule type" value="Genomic_DNA"/>
</dbReference>
<dbReference type="RefSeq" id="XP_011393910.1">
    <property type="nucleotide sequence ID" value="XM_011395608.1"/>
</dbReference>
<dbReference type="RefSeq" id="XP_011393911.1">
    <property type="nucleotide sequence ID" value="XM_011395609.1"/>
</dbReference>
<dbReference type="PDB" id="7R81">
    <property type="method" value="EM"/>
    <property type="resolution" value="2.70 A"/>
    <property type="chains" value="X2=1-130"/>
</dbReference>
<dbReference type="PDBsum" id="7R81"/>
<dbReference type="EMDB" id="EMD-24307"/>
<dbReference type="SMR" id="Q7RV75"/>
<dbReference type="FunCoup" id="Q7RV75">
    <property type="interactions" value="1037"/>
</dbReference>
<dbReference type="STRING" id="367110.Q7RV75"/>
<dbReference type="PaxDb" id="5141-EFNCRP00000006263"/>
<dbReference type="EnsemblFungi" id="ESA43161">
    <property type="protein sequence ID" value="ESA43161"/>
    <property type="gene ID" value="NCU06431"/>
</dbReference>
<dbReference type="EnsemblFungi" id="ESA43162">
    <property type="protein sequence ID" value="ESA43162"/>
    <property type="gene ID" value="NCU06431"/>
</dbReference>
<dbReference type="GeneID" id="3873491"/>
<dbReference type="KEGG" id="ncr:NCU06431"/>
<dbReference type="VEuPathDB" id="FungiDB:NCU06431"/>
<dbReference type="HOGENOM" id="CLU_098428_1_1_1"/>
<dbReference type="InParanoid" id="Q7RV75"/>
<dbReference type="OMA" id="LPAKNFG"/>
<dbReference type="OrthoDB" id="10250260at2759"/>
<dbReference type="Proteomes" id="UP000001805">
    <property type="component" value="Chromosome 3, Linkage Group III"/>
</dbReference>
<dbReference type="GO" id="GO:0022627">
    <property type="term" value="C:cytosolic small ribosomal subunit"/>
    <property type="evidence" value="ECO:0000318"/>
    <property type="project" value="GO_Central"/>
</dbReference>
<dbReference type="GO" id="GO:0003735">
    <property type="term" value="F:structural constituent of ribosome"/>
    <property type="evidence" value="ECO:0000318"/>
    <property type="project" value="GO_Central"/>
</dbReference>
<dbReference type="GO" id="GO:0006412">
    <property type="term" value="P:translation"/>
    <property type="evidence" value="ECO:0007669"/>
    <property type="project" value="InterPro"/>
</dbReference>
<dbReference type="FunFam" id="3.30.1370.30:FF:000001">
    <property type="entry name" value="40S ribosomal protein S15a"/>
    <property type="match status" value="1"/>
</dbReference>
<dbReference type="FunFam" id="3.30.1490.10:FF:000002">
    <property type="entry name" value="40S ribosomal protein S15a"/>
    <property type="match status" value="1"/>
</dbReference>
<dbReference type="Gene3D" id="3.30.1370.30">
    <property type="match status" value="1"/>
</dbReference>
<dbReference type="Gene3D" id="3.30.1490.10">
    <property type="match status" value="1"/>
</dbReference>
<dbReference type="InterPro" id="IPR000630">
    <property type="entry name" value="Ribosomal_uS8"/>
</dbReference>
<dbReference type="InterPro" id="IPR047863">
    <property type="entry name" value="Ribosomal_uS8_CS"/>
</dbReference>
<dbReference type="InterPro" id="IPR035987">
    <property type="entry name" value="Ribosomal_uS8_sf"/>
</dbReference>
<dbReference type="NCBIfam" id="NF003115">
    <property type="entry name" value="PRK04034.1"/>
    <property type="match status" value="1"/>
</dbReference>
<dbReference type="PANTHER" id="PTHR11758">
    <property type="entry name" value="40S RIBOSOMAL PROTEIN S15A"/>
    <property type="match status" value="1"/>
</dbReference>
<dbReference type="Pfam" id="PF00410">
    <property type="entry name" value="Ribosomal_S8"/>
    <property type="match status" value="1"/>
</dbReference>
<dbReference type="SUPFAM" id="SSF56047">
    <property type="entry name" value="Ribosomal protein S8"/>
    <property type="match status" value="1"/>
</dbReference>
<dbReference type="PROSITE" id="PS00053">
    <property type="entry name" value="RIBOSOMAL_S8"/>
    <property type="match status" value="1"/>
</dbReference>
<name>RS22_NEUCR</name>
<keyword id="KW-0002">3D-structure</keyword>
<keyword id="KW-0963">Cytoplasm</keyword>
<keyword id="KW-1185">Reference proteome</keyword>
<keyword id="KW-0687">Ribonucleoprotein</keyword>
<keyword id="KW-0689">Ribosomal protein</keyword>
<gene>
    <name type="primary">crp-27</name>
    <name type="synonym">rps22</name>
    <name type="ORF">NCU06431</name>
</gene>
<feature type="chain" id="PRO_0000126621" description="Small ribosomal subunit protein uS8">
    <location>
        <begin position="1"/>
        <end position="130"/>
    </location>
</feature>